<geneLocation type="mitochondrion"/>
<dbReference type="EC" id="7.1.1.9"/>
<dbReference type="EMBL" id="M64906">
    <property type="protein sequence ID" value="AAB01608.1"/>
    <property type="molecule type" value="Genomic_DNA"/>
</dbReference>
<dbReference type="SMR" id="P29649"/>
<dbReference type="UniPathway" id="UPA00705"/>
<dbReference type="GO" id="GO:0005743">
    <property type="term" value="C:mitochondrial inner membrane"/>
    <property type="evidence" value="ECO:0007669"/>
    <property type="project" value="UniProtKB-SubCell"/>
</dbReference>
<dbReference type="GO" id="GO:0045277">
    <property type="term" value="C:respiratory chain complex IV"/>
    <property type="evidence" value="ECO:0000250"/>
    <property type="project" value="UniProtKB"/>
</dbReference>
<dbReference type="GO" id="GO:0004129">
    <property type="term" value="F:cytochrome-c oxidase activity"/>
    <property type="evidence" value="ECO:0007669"/>
    <property type="project" value="UniProtKB-EC"/>
</dbReference>
<dbReference type="GO" id="GO:0020037">
    <property type="term" value="F:heme binding"/>
    <property type="evidence" value="ECO:0007669"/>
    <property type="project" value="InterPro"/>
</dbReference>
<dbReference type="GO" id="GO:0046872">
    <property type="term" value="F:metal ion binding"/>
    <property type="evidence" value="ECO:0007669"/>
    <property type="project" value="UniProtKB-KW"/>
</dbReference>
<dbReference type="GO" id="GO:0015990">
    <property type="term" value="P:electron transport coupled proton transport"/>
    <property type="evidence" value="ECO:0007669"/>
    <property type="project" value="TreeGrafter"/>
</dbReference>
<dbReference type="GO" id="GO:0006123">
    <property type="term" value="P:mitochondrial electron transport, cytochrome c to oxygen"/>
    <property type="evidence" value="ECO:0007669"/>
    <property type="project" value="TreeGrafter"/>
</dbReference>
<dbReference type="FunFam" id="1.20.210.10:FF:000009">
    <property type="entry name" value="Cytochrome c oxidase subunit 1"/>
    <property type="match status" value="1"/>
</dbReference>
<dbReference type="Gene3D" id="1.20.210.10">
    <property type="entry name" value="Cytochrome c oxidase-like, subunit I domain"/>
    <property type="match status" value="1"/>
</dbReference>
<dbReference type="InterPro" id="IPR023616">
    <property type="entry name" value="Cyt_c_oxase-like_su1_dom"/>
</dbReference>
<dbReference type="InterPro" id="IPR036927">
    <property type="entry name" value="Cyt_c_oxase-like_su1_sf"/>
</dbReference>
<dbReference type="InterPro" id="IPR000883">
    <property type="entry name" value="Cyt_C_Oxase_1"/>
</dbReference>
<dbReference type="InterPro" id="IPR023615">
    <property type="entry name" value="Cyt_c_Oxase_su1_BS"/>
</dbReference>
<dbReference type="PANTHER" id="PTHR10422">
    <property type="entry name" value="CYTOCHROME C OXIDASE SUBUNIT 1"/>
    <property type="match status" value="1"/>
</dbReference>
<dbReference type="PANTHER" id="PTHR10422:SF18">
    <property type="entry name" value="CYTOCHROME C OXIDASE SUBUNIT 1"/>
    <property type="match status" value="1"/>
</dbReference>
<dbReference type="Pfam" id="PF00115">
    <property type="entry name" value="COX1"/>
    <property type="match status" value="1"/>
</dbReference>
<dbReference type="PRINTS" id="PR01165">
    <property type="entry name" value="CYCOXIDASEI"/>
</dbReference>
<dbReference type="SUPFAM" id="SSF81442">
    <property type="entry name" value="Cytochrome c oxidase subunit I-like"/>
    <property type="match status" value="1"/>
</dbReference>
<dbReference type="PROSITE" id="PS50855">
    <property type="entry name" value="COX1"/>
    <property type="match status" value="1"/>
</dbReference>
<dbReference type="PROSITE" id="PS00077">
    <property type="entry name" value="COX1_CUB"/>
    <property type="match status" value="1"/>
</dbReference>
<keyword id="KW-0186">Copper</keyword>
<keyword id="KW-0249">Electron transport</keyword>
<keyword id="KW-0349">Heme</keyword>
<keyword id="KW-0408">Iron</keyword>
<keyword id="KW-0460">Magnesium</keyword>
<keyword id="KW-0472">Membrane</keyword>
<keyword id="KW-0479">Metal-binding</keyword>
<keyword id="KW-0496">Mitochondrion</keyword>
<keyword id="KW-0999">Mitochondrion inner membrane</keyword>
<keyword id="KW-0679">Respiratory chain</keyword>
<keyword id="KW-0915">Sodium</keyword>
<keyword id="KW-1278">Translocase</keyword>
<keyword id="KW-0812">Transmembrane</keyword>
<keyword id="KW-1133">Transmembrane helix</keyword>
<keyword id="KW-0813">Transport</keyword>
<accession>P29649</accession>
<evidence type="ECO:0000250" key="1">
    <source>
        <dbReference type="UniProtKB" id="P00395"/>
    </source>
</evidence>
<evidence type="ECO:0000250" key="2">
    <source>
        <dbReference type="UniProtKB" id="P00396"/>
    </source>
</evidence>
<evidence type="ECO:0000250" key="3">
    <source>
        <dbReference type="UniProtKB" id="P00401"/>
    </source>
</evidence>
<evidence type="ECO:0000305" key="4"/>
<gene>
    <name type="primary">mt-co1</name>
    <name type="synonym">coi</name>
    <name type="synonym">coxi</name>
    <name type="synonym">mtco1</name>
</gene>
<organism>
    <name type="scientific">Pantodon buchholzi</name>
    <name type="common">Freshwater butterflyfish</name>
    <dbReference type="NCBI Taxonomy" id="8276"/>
    <lineage>
        <taxon>Eukaryota</taxon>
        <taxon>Metazoa</taxon>
        <taxon>Chordata</taxon>
        <taxon>Craniata</taxon>
        <taxon>Vertebrata</taxon>
        <taxon>Euteleostomi</taxon>
        <taxon>Actinopterygii</taxon>
        <taxon>Neopterygii</taxon>
        <taxon>Teleostei</taxon>
        <taxon>Osteoglossocephala</taxon>
        <taxon>Osteoglossomorpha</taxon>
        <taxon>Osteoglossiformes</taxon>
        <taxon>Pantodontidae</taxon>
        <taxon>Pantodon</taxon>
    </lineage>
</organism>
<comment type="function">
    <text evidence="3">Component of the cytochrome c oxidase, the last enzyme in the mitochondrial electron transport chain which drives oxidative phosphorylation. The respiratory chain contains 3 multisubunit complexes succinate dehydrogenase (complex II, CII), ubiquinol-cytochrome c oxidoreductase (cytochrome b-c1 complex, complex III, CIII) and cytochrome c oxidase (complex IV, CIV), that cooperate to transfer electrons derived from NADH and succinate to molecular oxygen, creating an electrochemical gradient over the inner membrane that drives transmembrane transport and the ATP synthase. Cytochrome c oxidase is the component of the respiratory chain that catalyzes the reduction of oxygen to water. Electrons originating from reduced cytochrome c in the intermembrane space (IMS) are transferred via the dinuclear copper A center (CU(A)) of subunit 2 and heme A of subunit 1 to the active site in subunit 1, a binuclear center (BNC) formed by heme A3 and copper B (CU(B)). The BNC reduces molecular oxygen to 2 water molecules using 4 electrons from cytochrome c in the IMS and 4 protons from the mitochondrial matrix.</text>
</comment>
<comment type="catalytic activity">
    <reaction evidence="3">
        <text>4 Fe(II)-[cytochrome c] + O2 + 8 H(+)(in) = 4 Fe(III)-[cytochrome c] + 2 H2O + 4 H(+)(out)</text>
        <dbReference type="Rhea" id="RHEA:11436"/>
        <dbReference type="Rhea" id="RHEA-COMP:10350"/>
        <dbReference type="Rhea" id="RHEA-COMP:14399"/>
        <dbReference type="ChEBI" id="CHEBI:15377"/>
        <dbReference type="ChEBI" id="CHEBI:15378"/>
        <dbReference type="ChEBI" id="CHEBI:15379"/>
        <dbReference type="ChEBI" id="CHEBI:29033"/>
        <dbReference type="ChEBI" id="CHEBI:29034"/>
        <dbReference type="EC" id="7.1.1.9"/>
    </reaction>
    <physiologicalReaction direction="left-to-right" evidence="3">
        <dbReference type="Rhea" id="RHEA:11437"/>
    </physiologicalReaction>
</comment>
<comment type="cofactor">
    <cofactor evidence="2">
        <name>heme</name>
        <dbReference type="ChEBI" id="CHEBI:30413"/>
    </cofactor>
    <text evidence="2">Binds 2 heme A groups non-covalently per subunit.</text>
</comment>
<comment type="cofactor">
    <cofactor evidence="2">
        <name>Cu cation</name>
        <dbReference type="ChEBI" id="CHEBI:23378"/>
    </cofactor>
    <text evidence="2">Binds a copper B center.</text>
</comment>
<comment type="pathway">
    <text evidence="3">Energy metabolism; oxidative phosphorylation.</text>
</comment>
<comment type="subunit">
    <text evidence="1 2">Component of the cytochrome c oxidase (complex IV, CIV), a multisubunit enzyme composed of 14 subunits. The complex is composed of a catalytic core of 3 subunits MT-CO1, MT-CO2 and MT-CO3, encoded in the mitochondrial DNA, and 11 supernumerary subunits COX4I, COX5A, COX5B, COX6A, COX6B, COX6C, COX7A, COX7B, COX7C, COX8 and NDUFA4, which are encoded in the nuclear genome. The complex exists as a monomer or a dimer and forms supercomplexes (SCs) in the inner mitochondrial membrane with NADH-ubiquinone oxidoreductase (complex I, CI) and ubiquinol-cytochrome c oxidoreductase (cytochrome b-c1 complex, complex III, CIII), resulting in different assemblies (supercomplex SCI(1)III(2)IV(1) and megacomplex MCI(2)III(2)IV(2)) (By similarity). As a newly synthesized protein, rapidly incorporates into a multi-subunit assembly intermediate in the inner membrane, called MITRAC (mitochondrial translation regulation assembly intermediate of cytochrome c oxidase) complex, whose core components are COA3/MITRAC12 and COX14. Within the MITRAC complex, interacts with COA3 and with SMIM20/MITRAC7; the interaction with SMIM20 stabilizes the newly synthesized MT-CO1 and prevents its premature turnover. Interacts with TMEM177 in a COX20-dependent manner (By similarity).</text>
</comment>
<comment type="subcellular location">
    <subcellularLocation>
        <location evidence="2">Mitochondrion inner membrane</location>
        <topology evidence="2">Multi-pass membrane protein</topology>
    </subcellularLocation>
</comment>
<comment type="similarity">
    <text evidence="4">Belongs to the heme-copper respiratory oxidase family.</text>
</comment>
<protein>
    <recommendedName>
        <fullName>Cytochrome c oxidase subunit 1</fullName>
        <ecNumber>7.1.1.9</ecNumber>
    </recommendedName>
    <alternativeName>
        <fullName>Cytochrome c oxidase polypeptide I</fullName>
    </alternativeName>
</protein>
<feature type="chain" id="PRO_0000183377" description="Cytochrome c oxidase subunit 1">
    <location>
        <begin position="1" status="less than"/>
        <end position="184" status="greater than"/>
    </location>
</feature>
<feature type="transmembrane region" description="Helical; Name=VI" evidence="2">
    <location>
        <begin position="1" status="less than"/>
        <end position="26"/>
    </location>
</feature>
<feature type="topological domain" description="Mitochondrial matrix" evidence="2">
    <location>
        <begin position="27"/>
        <end position="34"/>
    </location>
</feature>
<feature type="transmembrane region" description="Helical; Name=VII" evidence="2">
    <location>
        <begin position="35"/>
        <end position="51"/>
    </location>
</feature>
<feature type="topological domain" description="Mitochondrial intermembrane" evidence="2">
    <location>
        <begin position="52"/>
        <end position="63"/>
    </location>
</feature>
<feature type="transmembrane region" description="Helical; Name=VIII" evidence="2">
    <location>
        <begin position="64"/>
        <end position="92"/>
    </location>
</feature>
<feature type="topological domain" description="Mitochondrial matrix" evidence="2">
    <location>
        <begin position="93"/>
        <end position="100"/>
    </location>
</feature>
<feature type="transmembrane region" description="Helical; Name=IX" evidence="2">
    <location>
        <begin position="101"/>
        <end position="122"/>
    </location>
</feature>
<feature type="topological domain" description="Mitochondrial intermembrane" evidence="2">
    <location>
        <begin position="123"/>
        <end position="135"/>
    </location>
</feature>
<feature type="transmembrane region" description="Helical; Name=X" evidence="2">
    <location>
        <begin position="136"/>
        <end position="165"/>
    </location>
</feature>
<feature type="topological domain" description="Mitochondrial matrix" evidence="2">
    <location>
        <begin position="166"/>
        <end position="171"/>
    </location>
</feature>
<feature type="transmembrane region" description="Helical; Name=XI" evidence="2">
    <location>
        <begin position="172"/>
        <end position="184" status="greater than"/>
    </location>
</feature>
<feature type="binding site" evidence="2">
    <location>
        <position position="5"/>
    </location>
    <ligand>
        <name>Cu cation</name>
        <dbReference type="ChEBI" id="CHEBI:23378"/>
        <label>B</label>
    </ligand>
</feature>
<feature type="binding site" evidence="2">
    <location>
        <position position="9"/>
    </location>
    <ligand>
        <name>O2</name>
        <dbReference type="ChEBI" id="CHEBI:15379"/>
    </ligand>
</feature>
<feature type="binding site" evidence="2">
    <location>
        <position position="55"/>
    </location>
    <ligand>
        <name>Cu cation</name>
        <dbReference type="ChEBI" id="CHEBI:23378"/>
        <label>B</label>
    </ligand>
</feature>
<feature type="binding site" evidence="2">
    <location>
        <position position="56"/>
    </location>
    <ligand>
        <name>Cu cation</name>
        <dbReference type="ChEBI" id="CHEBI:23378"/>
        <label>B</label>
    </ligand>
</feature>
<feature type="binding site" evidence="2">
    <location>
        <position position="133"/>
    </location>
    <ligand>
        <name>Mg(2+)</name>
        <dbReference type="ChEBI" id="CHEBI:18420"/>
        <note>ligand shared with MT-CO2</note>
    </ligand>
</feature>
<feature type="binding site" evidence="2">
    <location>
        <position position="134"/>
    </location>
    <ligand>
        <name>Mg(2+)</name>
        <dbReference type="ChEBI" id="CHEBI:18420"/>
        <note>ligand shared with MT-CO2</note>
    </ligand>
</feature>
<feature type="binding site" description="axial binding residue" evidence="2">
    <location>
        <position position="141"/>
    </location>
    <ligand>
        <name>heme a3</name>
        <dbReference type="ChEBI" id="CHEBI:83282"/>
        <note>high-spin</note>
    </ligand>
    <ligandPart>
        <name>Fe</name>
        <dbReference type="ChEBI" id="CHEBI:18248"/>
    </ligandPart>
</feature>
<feature type="binding site" description="axial binding residue" evidence="2">
    <location>
        <position position="143"/>
    </location>
    <ligand>
        <name>Fe(II)-heme a</name>
        <dbReference type="ChEBI" id="CHEBI:61715"/>
        <note>low-spin</note>
    </ligand>
    <ligandPart>
        <name>Fe</name>
        <dbReference type="ChEBI" id="CHEBI:18248"/>
    </ligandPart>
</feature>
<feature type="cross-link" description="1'-histidyl-3'-tyrosine (His-Tyr)" evidence="2">
    <location>
        <begin position="5"/>
        <end position="9"/>
    </location>
</feature>
<feature type="non-terminal residue">
    <location>
        <position position="1"/>
    </location>
</feature>
<feature type="non-terminal residue">
    <location>
        <position position="184"/>
    </location>
</feature>
<sequence length="184" mass="20709">WFFGHPEVYILILPGFGMISHIVAYYSGKKEPFGYMGMVWAMMAIGLLGFIVWAHHMFTVGMDVDTRAYFTSATMIIAIPTGVKVFSWLATLHGGSIKWDTPMLWALGFIFLFTVGGLTGIILANSSLDIVLHDTYYVVAHFHYVLSMGAVFAIMGGFVHWFPLFSGYTLHNTWTKIHFGVMFM</sequence>
<name>COX1_PANBU</name>
<reference key="1">
    <citation type="journal article" date="1991" name="Mol. Biol. Evol.">
        <title>Phylogenetic relationships of neopterygian fishes, inferred from mitochondrial DNA sequences.</title>
        <authorList>
            <person name="Normark B.B."/>
            <person name="McCune A.R."/>
            <person name="Harrison R.G."/>
        </authorList>
    </citation>
    <scope>NUCLEOTIDE SEQUENCE [GENOMIC DNA]</scope>
</reference>
<proteinExistence type="inferred from homology"/>